<protein>
    <recommendedName>
        <fullName evidence="1">Arginine--tRNA ligase</fullName>
        <ecNumber evidence="1">6.1.1.19</ecNumber>
    </recommendedName>
    <alternativeName>
        <fullName evidence="1">Arginyl-tRNA synthetase</fullName>
        <shortName evidence="1">ArgRS</shortName>
    </alternativeName>
</protein>
<name>SYR_CORDI</name>
<dbReference type="EC" id="6.1.1.19" evidence="1"/>
<dbReference type="EMBL" id="BX248356">
    <property type="protein sequence ID" value="CAE49555.1"/>
    <property type="molecule type" value="Genomic_DNA"/>
</dbReference>
<dbReference type="RefSeq" id="WP_010934757.1">
    <property type="nucleotide sequence ID" value="NC_002935.2"/>
</dbReference>
<dbReference type="SMR" id="Q6NHU6"/>
<dbReference type="STRING" id="257309.DIP1034"/>
<dbReference type="KEGG" id="cdi:DIP1034"/>
<dbReference type="HOGENOM" id="CLU_006406_0_1_11"/>
<dbReference type="Proteomes" id="UP000002198">
    <property type="component" value="Chromosome"/>
</dbReference>
<dbReference type="GO" id="GO:0005737">
    <property type="term" value="C:cytoplasm"/>
    <property type="evidence" value="ECO:0007669"/>
    <property type="project" value="UniProtKB-SubCell"/>
</dbReference>
<dbReference type="GO" id="GO:0004814">
    <property type="term" value="F:arginine-tRNA ligase activity"/>
    <property type="evidence" value="ECO:0007669"/>
    <property type="project" value="UniProtKB-UniRule"/>
</dbReference>
<dbReference type="GO" id="GO:0005524">
    <property type="term" value="F:ATP binding"/>
    <property type="evidence" value="ECO:0007669"/>
    <property type="project" value="UniProtKB-UniRule"/>
</dbReference>
<dbReference type="GO" id="GO:0006420">
    <property type="term" value="P:arginyl-tRNA aminoacylation"/>
    <property type="evidence" value="ECO:0007669"/>
    <property type="project" value="UniProtKB-UniRule"/>
</dbReference>
<dbReference type="CDD" id="cd07956">
    <property type="entry name" value="Anticodon_Ia_Arg"/>
    <property type="match status" value="1"/>
</dbReference>
<dbReference type="CDD" id="cd00671">
    <property type="entry name" value="ArgRS_core"/>
    <property type="match status" value="1"/>
</dbReference>
<dbReference type="FunFam" id="1.10.730.10:FF:000008">
    <property type="entry name" value="Arginine--tRNA ligase"/>
    <property type="match status" value="1"/>
</dbReference>
<dbReference type="FunFam" id="3.40.50.620:FF:000062">
    <property type="entry name" value="Arginine--tRNA ligase"/>
    <property type="match status" value="1"/>
</dbReference>
<dbReference type="Gene3D" id="3.30.1360.70">
    <property type="entry name" value="Arginyl tRNA synthetase N-terminal domain"/>
    <property type="match status" value="1"/>
</dbReference>
<dbReference type="Gene3D" id="3.40.50.620">
    <property type="entry name" value="HUPs"/>
    <property type="match status" value="1"/>
</dbReference>
<dbReference type="Gene3D" id="1.10.730.10">
    <property type="entry name" value="Isoleucyl-tRNA Synthetase, Domain 1"/>
    <property type="match status" value="1"/>
</dbReference>
<dbReference type="HAMAP" id="MF_00123">
    <property type="entry name" value="Arg_tRNA_synth"/>
    <property type="match status" value="1"/>
</dbReference>
<dbReference type="InterPro" id="IPR001412">
    <property type="entry name" value="aa-tRNA-synth_I_CS"/>
</dbReference>
<dbReference type="InterPro" id="IPR001278">
    <property type="entry name" value="Arg-tRNA-ligase"/>
</dbReference>
<dbReference type="InterPro" id="IPR005148">
    <property type="entry name" value="Arg-tRNA-synth_N"/>
</dbReference>
<dbReference type="InterPro" id="IPR036695">
    <property type="entry name" value="Arg-tRNA-synth_N_sf"/>
</dbReference>
<dbReference type="InterPro" id="IPR035684">
    <property type="entry name" value="ArgRS_core"/>
</dbReference>
<dbReference type="InterPro" id="IPR008909">
    <property type="entry name" value="DALR_anticod-bd"/>
</dbReference>
<dbReference type="InterPro" id="IPR014729">
    <property type="entry name" value="Rossmann-like_a/b/a_fold"/>
</dbReference>
<dbReference type="InterPro" id="IPR009080">
    <property type="entry name" value="tRNAsynth_Ia_anticodon-bd"/>
</dbReference>
<dbReference type="NCBIfam" id="TIGR00456">
    <property type="entry name" value="argS"/>
    <property type="match status" value="1"/>
</dbReference>
<dbReference type="PANTHER" id="PTHR11956:SF5">
    <property type="entry name" value="ARGININE--TRNA LIGASE, CYTOPLASMIC"/>
    <property type="match status" value="1"/>
</dbReference>
<dbReference type="PANTHER" id="PTHR11956">
    <property type="entry name" value="ARGINYL-TRNA SYNTHETASE"/>
    <property type="match status" value="1"/>
</dbReference>
<dbReference type="Pfam" id="PF03485">
    <property type="entry name" value="Arg_tRNA_synt_N"/>
    <property type="match status" value="1"/>
</dbReference>
<dbReference type="Pfam" id="PF05746">
    <property type="entry name" value="DALR_1"/>
    <property type="match status" value="1"/>
</dbReference>
<dbReference type="Pfam" id="PF00750">
    <property type="entry name" value="tRNA-synt_1d"/>
    <property type="match status" value="2"/>
</dbReference>
<dbReference type="PRINTS" id="PR01038">
    <property type="entry name" value="TRNASYNTHARG"/>
</dbReference>
<dbReference type="SMART" id="SM01016">
    <property type="entry name" value="Arg_tRNA_synt_N"/>
    <property type="match status" value="1"/>
</dbReference>
<dbReference type="SMART" id="SM00836">
    <property type="entry name" value="DALR_1"/>
    <property type="match status" value="1"/>
</dbReference>
<dbReference type="SUPFAM" id="SSF47323">
    <property type="entry name" value="Anticodon-binding domain of a subclass of class I aminoacyl-tRNA synthetases"/>
    <property type="match status" value="1"/>
</dbReference>
<dbReference type="SUPFAM" id="SSF55190">
    <property type="entry name" value="Arginyl-tRNA synthetase (ArgRS), N-terminal 'additional' domain"/>
    <property type="match status" value="1"/>
</dbReference>
<dbReference type="SUPFAM" id="SSF52374">
    <property type="entry name" value="Nucleotidylyl transferase"/>
    <property type="match status" value="1"/>
</dbReference>
<dbReference type="PROSITE" id="PS00178">
    <property type="entry name" value="AA_TRNA_LIGASE_I"/>
    <property type="match status" value="1"/>
</dbReference>
<accession>Q6NHU6</accession>
<feature type="chain" id="PRO_0000242009" description="Arginine--tRNA ligase">
    <location>
        <begin position="1"/>
        <end position="550"/>
    </location>
</feature>
<feature type="short sequence motif" description="'HIGH' region">
    <location>
        <begin position="130"/>
        <end position="140"/>
    </location>
</feature>
<evidence type="ECO:0000255" key="1">
    <source>
        <dbReference type="HAMAP-Rule" id="MF_00123"/>
    </source>
</evidence>
<sequence length="550" mass="59840">MTPADLSQLIKQTAIDVLSARELDTTVLPETVVVERPRNPEHGDYATNVALQIAKKVGMNPRELGQVLADSLAANTAIDEASIAGPGFINIRLAAAAQGEIVAKILEAGATFGHSDLYQGRRVNLEFVSANPTGPIHLGGTRWAAVGDSLGRVLEASGAQVTREYYFNDHGRQIDRFTNSLVASAKGEPTPEDGYGGDYIKEIADAVVAQHPDVLALAEADLNERFRATGVEMMFAHIKESLHEFGTDFDVYFHENSLFESGAVDKAIQTLKDNGNLYFNEGAWWLKSSEYGDDKDRVVIKSDGDAAYIAGDIAYVADKFDRGHDLCIYMLGADHHGYISRLRAAAAAMGYEPSNVEVLIGQMVNLVRDGKAVRMSKRAGTVITLDDLVEAIGIDGARYSMIRSSVDSSLDIDLQLWEQQSSDNPVYYVQYGHARLCSIARKAADLGITAIDPDLSLLTHDREGDLIRTLGEFPAVVKAAAELREPHRIARFAEDLAGTFHRFYDSCQILPKVGESAEPIHTARLALANATRQVLANALRLVGVSAPERM</sequence>
<reference key="1">
    <citation type="journal article" date="2003" name="Nucleic Acids Res.">
        <title>The complete genome sequence and analysis of Corynebacterium diphtheriae NCTC13129.</title>
        <authorList>
            <person name="Cerdeno-Tarraga A.-M."/>
            <person name="Efstratiou A."/>
            <person name="Dover L.G."/>
            <person name="Holden M.T.G."/>
            <person name="Pallen M.J."/>
            <person name="Bentley S.D."/>
            <person name="Besra G.S."/>
            <person name="Churcher C.M."/>
            <person name="James K.D."/>
            <person name="De Zoysa A."/>
            <person name="Chillingworth T."/>
            <person name="Cronin A."/>
            <person name="Dowd L."/>
            <person name="Feltwell T."/>
            <person name="Hamlin N."/>
            <person name="Holroyd S."/>
            <person name="Jagels K."/>
            <person name="Moule S."/>
            <person name="Quail M.A."/>
            <person name="Rabbinowitsch E."/>
            <person name="Rutherford K.M."/>
            <person name="Thomson N.R."/>
            <person name="Unwin L."/>
            <person name="Whitehead S."/>
            <person name="Barrell B.G."/>
            <person name="Parkhill J."/>
        </authorList>
    </citation>
    <scope>NUCLEOTIDE SEQUENCE [LARGE SCALE GENOMIC DNA]</scope>
    <source>
        <strain>ATCC 700971 / NCTC 13129 / Biotype gravis</strain>
    </source>
</reference>
<gene>
    <name evidence="1" type="primary">argS</name>
    <name type="ordered locus">DIP1034</name>
</gene>
<keyword id="KW-0030">Aminoacyl-tRNA synthetase</keyword>
<keyword id="KW-0067">ATP-binding</keyword>
<keyword id="KW-0963">Cytoplasm</keyword>
<keyword id="KW-0436">Ligase</keyword>
<keyword id="KW-0547">Nucleotide-binding</keyword>
<keyword id="KW-0648">Protein biosynthesis</keyword>
<keyword id="KW-1185">Reference proteome</keyword>
<comment type="catalytic activity">
    <reaction evidence="1">
        <text>tRNA(Arg) + L-arginine + ATP = L-arginyl-tRNA(Arg) + AMP + diphosphate</text>
        <dbReference type="Rhea" id="RHEA:20301"/>
        <dbReference type="Rhea" id="RHEA-COMP:9658"/>
        <dbReference type="Rhea" id="RHEA-COMP:9673"/>
        <dbReference type="ChEBI" id="CHEBI:30616"/>
        <dbReference type="ChEBI" id="CHEBI:32682"/>
        <dbReference type="ChEBI" id="CHEBI:33019"/>
        <dbReference type="ChEBI" id="CHEBI:78442"/>
        <dbReference type="ChEBI" id="CHEBI:78513"/>
        <dbReference type="ChEBI" id="CHEBI:456215"/>
        <dbReference type="EC" id="6.1.1.19"/>
    </reaction>
</comment>
<comment type="subunit">
    <text evidence="1">Monomer.</text>
</comment>
<comment type="subcellular location">
    <subcellularLocation>
        <location evidence="1">Cytoplasm</location>
    </subcellularLocation>
</comment>
<comment type="similarity">
    <text evidence="1">Belongs to the class-I aminoacyl-tRNA synthetase family.</text>
</comment>
<proteinExistence type="inferred from homology"/>
<organism>
    <name type="scientific">Corynebacterium diphtheriae (strain ATCC 700971 / NCTC 13129 / Biotype gravis)</name>
    <dbReference type="NCBI Taxonomy" id="257309"/>
    <lineage>
        <taxon>Bacteria</taxon>
        <taxon>Bacillati</taxon>
        <taxon>Actinomycetota</taxon>
        <taxon>Actinomycetes</taxon>
        <taxon>Mycobacteriales</taxon>
        <taxon>Corynebacteriaceae</taxon>
        <taxon>Corynebacterium</taxon>
    </lineage>
</organism>